<dbReference type="EMBL" id="CP000029">
    <property type="protein sequence ID" value="AAW54658.1"/>
    <property type="molecule type" value="Genomic_DNA"/>
</dbReference>
<dbReference type="RefSeq" id="WP_001830786.1">
    <property type="nucleotide sequence ID" value="NC_002976.3"/>
</dbReference>
<dbReference type="SMR" id="Q5HNJ8"/>
<dbReference type="STRING" id="176279.SERP1270"/>
<dbReference type="KEGG" id="ser:SERP1270"/>
<dbReference type="eggNOG" id="COG2220">
    <property type="taxonomic scope" value="Bacteria"/>
</dbReference>
<dbReference type="HOGENOM" id="CLU_070010_4_1_9"/>
<dbReference type="Proteomes" id="UP000000531">
    <property type="component" value="Chromosome"/>
</dbReference>
<dbReference type="GO" id="GO:0016787">
    <property type="term" value="F:hydrolase activity"/>
    <property type="evidence" value="ECO:0007669"/>
    <property type="project" value="UniProtKB-UniRule"/>
</dbReference>
<dbReference type="Gene3D" id="3.60.15.10">
    <property type="entry name" value="Ribonuclease Z/Hydroxyacylglutathione hydrolase-like"/>
    <property type="match status" value="1"/>
</dbReference>
<dbReference type="HAMAP" id="MF_00457">
    <property type="entry name" value="UPF0173"/>
    <property type="match status" value="1"/>
</dbReference>
<dbReference type="InterPro" id="IPR001279">
    <property type="entry name" value="Metallo-B-lactamas"/>
</dbReference>
<dbReference type="InterPro" id="IPR036866">
    <property type="entry name" value="RibonucZ/Hydroxyglut_hydro"/>
</dbReference>
<dbReference type="InterPro" id="IPR022877">
    <property type="entry name" value="UPF0173"/>
</dbReference>
<dbReference type="InterPro" id="IPR050114">
    <property type="entry name" value="UPF0173_UPF0282_UlaG_hydrolase"/>
</dbReference>
<dbReference type="NCBIfam" id="NF001911">
    <property type="entry name" value="PRK00685.1"/>
    <property type="match status" value="1"/>
</dbReference>
<dbReference type="PANTHER" id="PTHR43546:SF3">
    <property type="entry name" value="UPF0173 METAL-DEPENDENT HYDROLASE MJ1163"/>
    <property type="match status" value="1"/>
</dbReference>
<dbReference type="PANTHER" id="PTHR43546">
    <property type="entry name" value="UPF0173 METAL-DEPENDENT HYDROLASE MJ1163-RELATED"/>
    <property type="match status" value="1"/>
</dbReference>
<dbReference type="Pfam" id="PF12706">
    <property type="entry name" value="Lactamase_B_2"/>
    <property type="match status" value="1"/>
</dbReference>
<dbReference type="SMART" id="SM00849">
    <property type="entry name" value="Lactamase_B"/>
    <property type="match status" value="1"/>
</dbReference>
<dbReference type="SUPFAM" id="SSF56281">
    <property type="entry name" value="Metallo-hydrolase/oxidoreductase"/>
    <property type="match status" value="1"/>
</dbReference>
<name>Y1270_STAEQ</name>
<accession>Q5HNJ8</accession>
<organism>
    <name type="scientific">Staphylococcus epidermidis (strain ATCC 35984 / DSM 28319 / BCRC 17069 / CCUG 31568 / BM 3577 / RP62A)</name>
    <dbReference type="NCBI Taxonomy" id="176279"/>
    <lineage>
        <taxon>Bacteria</taxon>
        <taxon>Bacillati</taxon>
        <taxon>Bacillota</taxon>
        <taxon>Bacilli</taxon>
        <taxon>Bacillales</taxon>
        <taxon>Staphylococcaceae</taxon>
        <taxon>Staphylococcus</taxon>
    </lineage>
</organism>
<sequence>MKLSFHGQSTIYFEGNGKKVIVDPFISGNDKCDLDEQTLEVDYIILTHGHADHFGDVVELANRNHATVIGSAELQGYLSTYHGVENVHGMNIGGKAKFDFGTVKFVQAFHSSSFTHDNGVPVYLGMPMGIIVEAEGKTIYHTGDTGLFSDMKLIADRHPVDVCFVPIGDNFTMGIEDASYAINEFIKPTISVPIHYNTFPLIEQDPEQFKDAVQVGEVQILKPGESVEF</sequence>
<protein>
    <recommendedName>
        <fullName evidence="1">UPF0173 metal-dependent hydrolase SERP1270</fullName>
    </recommendedName>
</protein>
<proteinExistence type="inferred from homology"/>
<reference key="1">
    <citation type="journal article" date="2005" name="J. Bacteriol.">
        <title>Insights on evolution of virulence and resistance from the complete genome analysis of an early methicillin-resistant Staphylococcus aureus strain and a biofilm-producing methicillin-resistant Staphylococcus epidermidis strain.</title>
        <authorList>
            <person name="Gill S.R."/>
            <person name="Fouts D.E."/>
            <person name="Archer G.L."/>
            <person name="Mongodin E.F."/>
            <person name="DeBoy R.T."/>
            <person name="Ravel J."/>
            <person name="Paulsen I.T."/>
            <person name="Kolonay J.F."/>
            <person name="Brinkac L.M."/>
            <person name="Beanan M.J."/>
            <person name="Dodson R.J."/>
            <person name="Daugherty S.C."/>
            <person name="Madupu R."/>
            <person name="Angiuoli S.V."/>
            <person name="Durkin A.S."/>
            <person name="Haft D.H."/>
            <person name="Vamathevan J.J."/>
            <person name="Khouri H."/>
            <person name="Utterback T.R."/>
            <person name="Lee C."/>
            <person name="Dimitrov G."/>
            <person name="Jiang L."/>
            <person name="Qin H."/>
            <person name="Weidman J."/>
            <person name="Tran K."/>
            <person name="Kang K.H."/>
            <person name="Hance I.R."/>
            <person name="Nelson K.E."/>
            <person name="Fraser C.M."/>
        </authorList>
    </citation>
    <scope>NUCLEOTIDE SEQUENCE [LARGE SCALE GENOMIC DNA]</scope>
    <source>
        <strain>ATCC 35984 / DSM 28319 / BCRC 17069 / CCUG 31568 / BM 3577 / RP62A</strain>
    </source>
</reference>
<gene>
    <name type="ordered locus">SERP1270</name>
</gene>
<comment type="similarity">
    <text evidence="1">Belongs to the UPF0173 family.</text>
</comment>
<keyword id="KW-0378">Hydrolase</keyword>
<keyword id="KW-1185">Reference proteome</keyword>
<feature type="chain" id="PRO_0000156385" description="UPF0173 metal-dependent hydrolase SERP1270">
    <location>
        <begin position="1"/>
        <end position="229"/>
    </location>
</feature>
<evidence type="ECO:0000255" key="1">
    <source>
        <dbReference type="HAMAP-Rule" id="MF_00457"/>
    </source>
</evidence>